<name>COF1_MACFA</name>
<sequence>MASGVAVSDGVIKVFNDMKVRKSSTPEEVKKRKKAVLFCLSEDKKNIILEEGKEILVGDVGQTVDDPYATFVKMLPDKDCRYALYDATYETKESKKEDLVFIFWAPECAPLKSKMIYASSKDAIKKKLTGIKHELQANCYEEVKDRCTLAEKLGGSAVISLEGKPL</sequence>
<protein>
    <recommendedName>
        <fullName>Cofilin-1</fullName>
    </recommendedName>
    <alternativeName>
        <fullName>Cofilin, non-muscle isoform</fullName>
    </alternativeName>
</protein>
<dbReference type="EMBL" id="AB169624">
    <property type="protein sequence ID" value="BAE01705.1"/>
    <property type="molecule type" value="mRNA"/>
</dbReference>
<dbReference type="RefSeq" id="XP_005577281.1">
    <property type="nucleotide sequence ID" value="XM_005577224.4"/>
</dbReference>
<dbReference type="BMRB" id="Q4R5C0"/>
<dbReference type="SMR" id="Q4R5C0"/>
<dbReference type="STRING" id="9541.ENSMFAP00000029293"/>
<dbReference type="Ensembl" id="ENSMFAT00000003552.2">
    <property type="protein sequence ID" value="ENSMFAP00000029356.1"/>
    <property type="gene ID" value="ENSMFAG00000041919.2"/>
</dbReference>
<dbReference type="GeneID" id="101866299"/>
<dbReference type="KEGG" id="mcf:101866299"/>
<dbReference type="CTD" id="1072"/>
<dbReference type="VEuPathDB" id="HostDB:ENSMFAG00000041919"/>
<dbReference type="eggNOG" id="KOG1735">
    <property type="taxonomic scope" value="Eukaryota"/>
</dbReference>
<dbReference type="GeneTree" id="ENSGT00950000183000"/>
<dbReference type="OMA" id="WSMIYAT"/>
<dbReference type="Proteomes" id="UP000233100">
    <property type="component" value="Chromosome 14"/>
</dbReference>
<dbReference type="Bgee" id="ENSMFAG00000041919">
    <property type="expression patterns" value="Expressed in frontal cortex and 13 other cell types or tissues"/>
</dbReference>
<dbReference type="GO" id="GO:0015629">
    <property type="term" value="C:actin cytoskeleton"/>
    <property type="evidence" value="ECO:0007669"/>
    <property type="project" value="InterPro"/>
</dbReference>
<dbReference type="GO" id="GO:0005737">
    <property type="term" value="C:cytoplasm"/>
    <property type="evidence" value="ECO:0007669"/>
    <property type="project" value="UniProtKB-KW"/>
</dbReference>
<dbReference type="GO" id="GO:0030426">
    <property type="term" value="C:growth cone"/>
    <property type="evidence" value="ECO:0007669"/>
    <property type="project" value="UniProtKB-SubCell"/>
</dbReference>
<dbReference type="GO" id="GO:0030027">
    <property type="term" value="C:lamellipodium"/>
    <property type="evidence" value="ECO:0000250"/>
    <property type="project" value="UniProtKB"/>
</dbReference>
<dbReference type="GO" id="GO:0031258">
    <property type="term" value="C:lamellipodium membrane"/>
    <property type="evidence" value="ECO:0007669"/>
    <property type="project" value="UniProtKB-SubCell"/>
</dbReference>
<dbReference type="GO" id="GO:0016363">
    <property type="term" value="C:nuclear matrix"/>
    <property type="evidence" value="ECO:0007669"/>
    <property type="project" value="UniProtKB-SubCell"/>
</dbReference>
<dbReference type="GO" id="GO:0032587">
    <property type="term" value="C:ruffle membrane"/>
    <property type="evidence" value="ECO:0007669"/>
    <property type="project" value="UniProtKB-SubCell"/>
</dbReference>
<dbReference type="GO" id="GO:0051015">
    <property type="term" value="F:actin filament binding"/>
    <property type="evidence" value="ECO:0000250"/>
    <property type="project" value="UniProtKB"/>
</dbReference>
<dbReference type="GO" id="GO:0030042">
    <property type="term" value="P:actin filament depolymerization"/>
    <property type="evidence" value="ECO:0007669"/>
    <property type="project" value="InterPro"/>
</dbReference>
<dbReference type="GO" id="GO:0007015">
    <property type="term" value="P:actin filament organization"/>
    <property type="evidence" value="ECO:0000250"/>
    <property type="project" value="UniProtKB"/>
</dbReference>
<dbReference type="GO" id="GO:0007010">
    <property type="term" value="P:cytoskeleton organization"/>
    <property type="evidence" value="ECO:0000250"/>
    <property type="project" value="UniProtKB"/>
</dbReference>
<dbReference type="GO" id="GO:0051293">
    <property type="term" value="P:establishment of spindle localization"/>
    <property type="evidence" value="ECO:0000250"/>
    <property type="project" value="UniProtKB"/>
</dbReference>
<dbReference type="GO" id="GO:0040019">
    <property type="term" value="P:positive regulation of embryonic development"/>
    <property type="evidence" value="ECO:0000250"/>
    <property type="project" value="UniProtKB"/>
</dbReference>
<dbReference type="GO" id="GO:0022604">
    <property type="term" value="P:regulation of cell morphogenesis"/>
    <property type="evidence" value="ECO:0000250"/>
    <property type="project" value="UniProtKB"/>
</dbReference>
<dbReference type="CDD" id="cd11286">
    <property type="entry name" value="ADF_cofilin_like"/>
    <property type="match status" value="1"/>
</dbReference>
<dbReference type="FunFam" id="3.40.20.10:FF:000010">
    <property type="entry name" value="Putative destrin"/>
    <property type="match status" value="1"/>
</dbReference>
<dbReference type="Gene3D" id="3.40.20.10">
    <property type="entry name" value="Severin"/>
    <property type="match status" value="1"/>
</dbReference>
<dbReference type="InterPro" id="IPR002108">
    <property type="entry name" value="ADF-H"/>
</dbReference>
<dbReference type="InterPro" id="IPR029006">
    <property type="entry name" value="ADF-H/Gelsolin-like_dom_sf"/>
</dbReference>
<dbReference type="InterPro" id="IPR017904">
    <property type="entry name" value="ADF/Cofilin"/>
</dbReference>
<dbReference type="PANTHER" id="PTHR11913">
    <property type="entry name" value="COFILIN-RELATED"/>
    <property type="match status" value="1"/>
</dbReference>
<dbReference type="Pfam" id="PF00241">
    <property type="entry name" value="Cofilin_ADF"/>
    <property type="match status" value="1"/>
</dbReference>
<dbReference type="PRINTS" id="PR00006">
    <property type="entry name" value="COFILIN"/>
</dbReference>
<dbReference type="SMART" id="SM00102">
    <property type="entry name" value="ADF"/>
    <property type="match status" value="1"/>
</dbReference>
<dbReference type="SUPFAM" id="SSF55753">
    <property type="entry name" value="Actin depolymerizing proteins"/>
    <property type="match status" value="1"/>
</dbReference>
<dbReference type="PROSITE" id="PS51263">
    <property type="entry name" value="ADF_H"/>
    <property type="match status" value="1"/>
</dbReference>
<comment type="function">
    <text evidence="3 4">Binds to F-actin and exhibits pH-sensitive F-actin depolymerizing activity (By similarity). Important for normal progress through mitosis and normal cytokinesis (By similarity). In conjunction with the subcortical maternal complex (SCMC), plays an essential role for zygotes to progress beyond the first embryonic cell divisions via regulation of actin dynamics (By similarity). Required for the centralization of the mitotic spindle and symmetric division of zygotes (By similarity). Plays a role in the regulation of cell morphology and cytoskeletal organization in epithelial cells (By similarity). Required for the up-regulation of atypical chemokine receptor ACKR2 from endosomal compartment to cell membrane, increasing its efficiency in chemokine uptake and degradation (By similarity). Required for neural tube morphogenesis and neural crest cell migration (By similarity).</text>
</comment>
<comment type="subunit">
    <text evidence="2 3">Can bind G- and F-actin in a 1:1 ratio of cofilin to actin (By similarity). It is a major component of intranuclear and cytoplasmic actin rods (By similarity). Interacts with the subcortical maternal complex (SCMC) via interaction with TLE6 and NLRP5 (By similarity). Interacts with C9orf72 (By similarity).</text>
</comment>
<comment type="subcellular location">
    <subcellularLocation>
        <location evidence="1">Nucleus matrix</location>
    </subcellularLocation>
    <subcellularLocation>
        <location evidence="1">Cytoplasm</location>
        <location evidence="1">Cytoskeleton</location>
    </subcellularLocation>
    <subcellularLocation>
        <location evidence="1">Cell projection</location>
        <location evidence="1">Ruffle membrane</location>
        <topology evidence="1">Peripheral membrane protein</topology>
        <orientation evidence="1">Cytoplasmic side</orientation>
    </subcellularLocation>
    <subcellularLocation>
        <location evidence="1">Cell projection</location>
        <location evidence="1">Lamellipodium membrane</location>
        <topology evidence="1">Peripheral membrane protein</topology>
        <orientation evidence="1">Cytoplasmic side</orientation>
    </subcellularLocation>
    <subcellularLocation>
        <location evidence="3">Cell projection</location>
        <location evidence="3">Lamellipodium</location>
    </subcellularLocation>
    <subcellularLocation>
        <location evidence="3">Cell projection</location>
        <location evidence="3">Growth cone</location>
    </subcellularLocation>
    <subcellularLocation>
        <location evidence="3">Cell projection</location>
        <location evidence="3">Axon</location>
    </subcellularLocation>
    <text evidence="1 4">Colocalizes with the actin cytoskeleton in membrane ruffles and lamellipodia. Detected at the cleavage furrow and contractile ring during cytokinesis. Almost completely in nucleus in cells exposed to heat shock or 10% dimethyl sulfoxide.</text>
</comment>
<comment type="PTM">
    <text evidence="1">Inactivated by phosphorylation on Ser-3. Phosphorylated on Ser-3 in resting cells (By similarity). Dephosphorylated by PDXP/chronophin; this restores its activity in promoting actin filament depolymerization. The phosphorylation of Ser-24 may prevent recognition of the nuclear localization signal (By similarity). Phosphorylated via a ARRB1-RAC1-LIMK1-PAK1 cascade upon active ligand stimulation of atypical chemokine receptor ACKR2 (By similarity).</text>
</comment>
<comment type="similarity">
    <text evidence="7">Belongs to the actin-binding proteins ADF family.</text>
</comment>
<reference key="1">
    <citation type="submission" date="2005-06" db="EMBL/GenBank/DDBJ databases">
        <title>DNA sequences of macaque genes expressed in brain or testis and its evolutionary implications.</title>
        <authorList>
            <consortium name="International consortium for macaque cDNA sequencing and analysis"/>
        </authorList>
    </citation>
    <scope>NUCLEOTIDE SEQUENCE [LARGE SCALE MRNA]</scope>
    <source>
        <tissue>Temporal cortex</tissue>
    </source>
</reference>
<proteinExistence type="evidence at transcript level"/>
<keyword id="KW-0007">Acetylation</keyword>
<keyword id="KW-0009">Actin-binding</keyword>
<keyword id="KW-1003">Cell membrane</keyword>
<keyword id="KW-0966">Cell projection</keyword>
<keyword id="KW-0963">Cytoplasm</keyword>
<keyword id="KW-0206">Cytoskeleton</keyword>
<keyword id="KW-1017">Isopeptide bond</keyword>
<keyword id="KW-0472">Membrane</keyword>
<keyword id="KW-0539">Nucleus</keyword>
<keyword id="KW-0597">Phosphoprotein</keyword>
<keyword id="KW-1185">Reference proteome</keyword>
<keyword id="KW-0832">Ubl conjugation</keyword>
<evidence type="ECO:0000250" key="1"/>
<evidence type="ECO:0000250" key="2">
    <source>
        <dbReference type="UniProtKB" id="P10668"/>
    </source>
</evidence>
<evidence type="ECO:0000250" key="3">
    <source>
        <dbReference type="UniProtKB" id="P18760"/>
    </source>
</evidence>
<evidence type="ECO:0000250" key="4">
    <source>
        <dbReference type="UniProtKB" id="P23528"/>
    </source>
</evidence>
<evidence type="ECO:0000255" key="5"/>
<evidence type="ECO:0000255" key="6">
    <source>
        <dbReference type="PROSITE-ProRule" id="PRU00599"/>
    </source>
</evidence>
<evidence type="ECO:0000305" key="7"/>
<gene>
    <name type="primary">CFL1</name>
    <name type="ORF">QtrA-12052</name>
</gene>
<accession>Q4R5C0</accession>
<feature type="initiator methionine" description="Removed" evidence="4">
    <location>
        <position position="1"/>
    </location>
</feature>
<feature type="chain" id="PRO_0000214899" description="Cofilin-1">
    <location>
        <begin position="2"/>
        <end position="166"/>
    </location>
</feature>
<feature type="domain" description="ADF-H" evidence="6">
    <location>
        <begin position="4"/>
        <end position="153"/>
    </location>
</feature>
<feature type="short sequence motif" description="Nuclear localization signal" evidence="5">
    <location>
        <begin position="30"/>
        <end position="34"/>
    </location>
</feature>
<feature type="modified residue" description="N-acetylalanine" evidence="4">
    <location>
        <position position="2"/>
    </location>
</feature>
<feature type="modified residue" description="Phosphoserine" evidence="4">
    <location>
        <position position="3"/>
    </location>
</feature>
<feature type="modified residue" description="Phosphoserine" evidence="3">
    <location>
        <position position="8"/>
    </location>
</feature>
<feature type="modified residue" description="N6-acetyllysine" evidence="4">
    <location>
        <position position="13"/>
    </location>
</feature>
<feature type="modified residue" description="Phosphothreonine" evidence="4">
    <location>
        <position position="25"/>
    </location>
</feature>
<feature type="modified residue" description="Phosphoserine" evidence="4">
    <location>
        <position position="41"/>
    </location>
</feature>
<feature type="modified residue" description="Phosphotyrosine" evidence="4">
    <location>
        <position position="68"/>
    </location>
</feature>
<feature type="modified residue" description="N6-acetyllysine" evidence="4">
    <location>
        <position position="73"/>
    </location>
</feature>
<feature type="modified residue" description="Phosphotyrosine" evidence="4">
    <location>
        <position position="140"/>
    </location>
</feature>
<feature type="modified residue" description="N6-acetyllysine" evidence="4">
    <location>
        <position position="144"/>
    </location>
</feature>
<feature type="modified residue" description="Phosphoserine" evidence="4">
    <location>
        <position position="156"/>
    </location>
</feature>
<feature type="cross-link" description="Glycyl lysine isopeptide (Lys-Gly) (interchain with G-Cter in SUMO2)" evidence="4">
    <location>
        <position position="132"/>
    </location>
</feature>
<organism>
    <name type="scientific">Macaca fascicularis</name>
    <name type="common">Crab-eating macaque</name>
    <name type="synonym">Cynomolgus monkey</name>
    <dbReference type="NCBI Taxonomy" id="9541"/>
    <lineage>
        <taxon>Eukaryota</taxon>
        <taxon>Metazoa</taxon>
        <taxon>Chordata</taxon>
        <taxon>Craniata</taxon>
        <taxon>Vertebrata</taxon>
        <taxon>Euteleostomi</taxon>
        <taxon>Mammalia</taxon>
        <taxon>Eutheria</taxon>
        <taxon>Euarchontoglires</taxon>
        <taxon>Primates</taxon>
        <taxon>Haplorrhini</taxon>
        <taxon>Catarrhini</taxon>
        <taxon>Cercopithecidae</taxon>
        <taxon>Cercopithecinae</taxon>
        <taxon>Macaca</taxon>
    </lineage>
</organism>